<accession>P54270</accession>
<organism>
    <name type="scientific">Gracilaria gracilis</name>
    <name type="common">Red alga</name>
    <dbReference type="NCBI Taxonomy" id="2777"/>
    <lineage>
        <taxon>Eukaryota</taxon>
        <taxon>Rhodophyta</taxon>
        <taxon>Florideophyceae</taxon>
        <taxon>Rhodymeniophycidae</taxon>
        <taxon>Gracilariales</taxon>
        <taxon>Gracilariaceae</taxon>
        <taxon>Gracilaria</taxon>
    </lineage>
</organism>
<proteinExistence type="inferred from homology"/>
<name>G3PC_GRAGA</name>
<sequence length="335" mass="36144">MTVPQVGINGFGRIGRLVLRAAIEKDTMSVVAINDPFIDLEYMAYMFKFDSTHGRYAGSVETKDGKLIVNGKSITIYGHRDPAEIPWAEAGADYVVESTGVFTLKEKAEKHFTGGAKKVIISAPSKDAPMFVCGVNEDKYTPDLNVISNASCTTNCLAPLVKVIHEKYGIEEGLMTTVHATTATQKTVDGPSQKDWRGGRGAGANIIPSSTGAAKAVGKVLPELNGKLTGMAFRVPTSDVSVVDLTVRLATETSYDDIKATMKAAAEDSMKGILKYTEEAVVSTDFIHEEASCVFDAGAGIMLNSRFCKLVAWYDNEWGYSNRVVDLIAHVAKLQ</sequence>
<gene>
    <name type="primary">GAPC</name>
</gene>
<protein>
    <recommendedName>
        <fullName>Glyceraldehyde-3-phosphate dehydrogenase, cytosolic</fullName>
        <ecNumber>1.2.1.12</ecNumber>
    </recommendedName>
</protein>
<reference key="1">
    <citation type="journal article" date="1995" name="Curr. Genet.">
        <title>The nuclear gene and cDNAs encoding cytosolic glyceraldehyde-3-phosphate dehydrogenase from the marine red alga Gracilaria verrucosa: cloning, characterization and phylogenetic analysis.</title>
        <authorList>
            <person name="Zhou Y.H."/>
            <person name="Ragan M.A."/>
        </authorList>
    </citation>
    <scope>NUCLEOTIDE SEQUENCE [GENOMIC DNA]</scope>
</reference>
<feature type="chain" id="PRO_0000145601" description="Glyceraldehyde-3-phosphate dehydrogenase, cytosolic">
    <location>
        <begin position="1"/>
        <end position="335"/>
    </location>
</feature>
<feature type="active site" description="Nucleophile" evidence="2">
    <location>
        <position position="152"/>
    </location>
</feature>
<feature type="binding site" evidence="1">
    <location>
        <begin position="13"/>
        <end position="14"/>
    </location>
    <ligand>
        <name>NAD(+)</name>
        <dbReference type="ChEBI" id="CHEBI:57540"/>
    </ligand>
</feature>
<feature type="binding site" evidence="1">
    <location>
        <position position="35"/>
    </location>
    <ligand>
        <name>NAD(+)</name>
        <dbReference type="ChEBI" id="CHEBI:57540"/>
    </ligand>
</feature>
<feature type="binding site" evidence="1">
    <location>
        <position position="80"/>
    </location>
    <ligand>
        <name>NAD(+)</name>
        <dbReference type="ChEBI" id="CHEBI:57540"/>
    </ligand>
</feature>
<feature type="binding site" evidence="1">
    <location>
        <begin position="151"/>
        <end position="153"/>
    </location>
    <ligand>
        <name>D-glyceraldehyde 3-phosphate</name>
        <dbReference type="ChEBI" id="CHEBI:59776"/>
    </ligand>
</feature>
<feature type="binding site" evidence="1">
    <location>
        <position position="182"/>
    </location>
    <ligand>
        <name>D-glyceraldehyde 3-phosphate</name>
        <dbReference type="ChEBI" id="CHEBI:59776"/>
    </ligand>
</feature>
<feature type="binding site" evidence="1">
    <location>
        <begin position="211"/>
        <end position="212"/>
    </location>
    <ligand>
        <name>D-glyceraldehyde 3-phosphate</name>
        <dbReference type="ChEBI" id="CHEBI:59776"/>
    </ligand>
</feature>
<feature type="binding site" evidence="1">
    <location>
        <position position="234"/>
    </location>
    <ligand>
        <name>D-glyceraldehyde 3-phosphate</name>
        <dbReference type="ChEBI" id="CHEBI:59776"/>
    </ligand>
</feature>
<feature type="binding site" evidence="1">
    <location>
        <position position="316"/>
    </location>
    <ligand>
        <name>NAD(+)</name>
        <dbReference type="ChEBI" id="CHEBI:57540"/>
    </ligand>
</feature>
<feature type="site" description="Activates thiol group during catalysis" evidence="1">
    <location>
        <position position="179"/>
    </location>
</feature>
<keyword id="KW-0963">Cytoplasm</keyword>
<keyword id="KW-0324">Glycolysis</keyword>
<keyword id="KW-0520">NAD</keyword>
<keyword id="KW-0560">Oxidoreductase</keyword>
<comment type="catalytic activity">
    <reaction evidence="2">
        <text>D-glyceraldehyde 3-phosphate + phosphate + NAD(+) = (2R)-3-phospho-glyceroyl phosphate + NADH + H(+)</text>
        <dbReference type="Rhea" id="RHEA:10300"/>
        <dbReference type="ChEBI" id="CHEBI:15378"/>
        <dbReference type="ChEBI" id="CHEBI:43474"/>
        <dbReference type="ChEBI" id="CHEBI:57540"/>
        <dbReference type="ChEBI" id="CHEBI:57604"/>
        <dbReference type="ChEBI" id="CHEBI:57945"/>
        <dbReference type="ChEBI" id="CHEBI:59776"/>
        <dbReference type="EC" id="1.2.1.12"/>
    </reaction>
</comment>
<comment type="pathway">
    <text>Carbohydrate degradation; glycolysis; pyruvate from D-glyceraldehyde 3-phosphate: step 1/5.</text>
</comment>
<comment type="subunit">
    <text evidence="1">Homotetramer.</text>
</comment>
<comment type="subcellular location">
    <subcellularLocation>
        <location>Cytoplasm</location>
    </subcellularLocation>
</comment>
<comment type="similarity">
    <text evidence="3">Belongs to the glyceraldehyde-3-phosphate dehydrogenase family.</text>
</comment>
<evidence type="ECO:0000250" key="1"/>
<evidence type="ECO:0000255" key="2">
    <source>
        <dbReference type="PROSITE-ProRule" id="PRU10009"/>
    </source>
</evidence>
<evidence type="ECO:0000305" key="3"/>
<dbReference type="EC" id="1.2.1.12"/>
<dbReference type="EMBL" id="L38661">
    <property type="protein sequence ID" value="AAB01379.1"/>
    <property type="molecule type" value="Genomic_DNA"/>
</dbReference>
<dbReference type="PIR" id="S59579">
    <property type="entry name" value="S59579"/>
</dbReference>
<dbReference type="SMR" id="P54270"/>
<dbReference type="UniPathway" id="UPA00109">
    <property type="reaction ID" value="UER00184"/>
</dbReference>
<dbReference type="GO" id="GO:0005829">
    <property type="term" value="C:cytosol"/>
    <property type="evidence" value="ECO:0007669"/>
    <property type="project" value="TreeGrafter"/>
</dbReference>
<dbReference type="GO" id="GO:0004365">
    <property type="term" value="F:glyceraldehyde-3-phosphate dehydrogenase (NAD+) (phosphorylating) activity"/>
    <property type="evidence" value="ECO:0007669"/>
    <property type="project" value="UniProtKB-EC"/>
</dbReference>
<dbReference type="GO" id="GO:0051287">
    <property type="term" value="F:NAD binding"/>
    <property type="evidence" value="ECO:0007669"/>
    <property type="project" value="InterPro"/>
</dbReference>
<dbReference type="GO" id="GO:0050661">
    <property type="term" value="F:NADP binding"/>
    <property type="evidence" value="ECO:0007669"/>
    <property type="project" value="InterPro"/>
</dbReference>
<dbReference type="GO" id="GO:0006006">
    <property type="term" value="P:glucose metabolic process"/>
    <property type="evidence" value="ECO:0007669"/>
    <property type="project" value="InterPro"/>
</dbReference>
<dbReference type="GO" id="GO:0006096">
    <property type="term" value="P:glycolytic process"/>
    <property type="evidence" value="ECO:0007669"/>
    <property type="project" value="UniProtKB-UniPathway"/>
</dbReference>
<dbReference type="CDD" id="cd18126">
    <property type="entry name" value="GAPDH_I_C"/>
    <property type="match status" value="1"/>
</dbReference>
<dbReference type="CDD" id="cd05214">
    <property type="entry name" value="GAPDH_I_N"/>
    <property type="match status" value="1"/>
</dbReference>
<dbReference type="FunFam" id="3.30.360.10:FF:000001">
    <property type="entry name" value="Glyceraldehyde-3-phosphate dehydrogenase"/>
    <property type="match status" value="1"/>
</dbReference>
<dbReference type="FunFam" id="3.40.50.720:FF:000266">
    <property type="entry name" value="Glyceraldehyde-3-phosphate dehydrogenase"/>
    <property type="match status" value="1"/>
</dbReference>
<dbReference type="FunFam" id="3.40.50.720:FF:000636">
    <property type="entry name" value="Glyceraldehyde-3-phosphate dehydrogenase 2, cytosolic"/>
    <property type="match status" value="1"/>
</dbReference>
<dbReference type="Gene3D" id="3.30.360.10">
    <property type="entry name" value="Dihydrodipicolinate Reductase, domain 2"/>
    <property type="match status" value="1"/>
</dbReference>
<dbReference type="Gene3D" id="3.40.50.720">
    <property type="entry name" value="NAD(P)-binding Rossmann-like Domain"/>
    <property type="match status" value="1"/>
</dbReference>
<dbReference type="InterPro" id="IPR020831">
    <property type="entry name" value="GlycerAld/Erythrose_P_DH"/>
</dbReference>
<dbReference type="InterPro" id="IPR020830">
    <property type="entry name" value="GlycerAld_3-P_DH_AS"/>
</dbReference>
<dbReference type="InterPro" id="IPR020829">
    <property type="entry name" value="GlycerAld_3-P_DH_cat"/>
</dbReference>
<dbReference type="InterPro" id="IPR020828">
    <property type="entry name" value="GlycerAld_3-P_DH_NAD(P)-bd"/>
</dbReference>
<dbReference type="InterPro" id="IPR006424">
    <property type="entry name" value="Glyceraldehyde-3-P_DH_1"/>
</dbReference>
<dbReference type="InterPro" id="IPR036291">
    <property type="entry name" value="NAD(P)-bd_dom_sf"/>
</dbReference>
<dbReference type="NCBIfam" id="TIGR01534">
    <property type="entry name" value="GAPDH-I"/>
    <property type="match status" value="1"/>
</dbReference>
<dbReference type="PANTHER" id="PTHR10836">
    <property type="entry name" value="GLYCERALDEHYDE 3-PHOSPHATE DEHYDROGENASE"/>
    <property type="match status" value="1"/>
</dbReference>
<dbReference type="PANTHER" id="PTHR10836:SF76">
    <property type="entry name" value="GLYCERALDEHYDE-3-PHOSPHATE DEHYDROGENASE-RELATED"/>
    <property type="match status" value="1"/>
</dbReference>
<dbReference type="Pfam" id="PF02800">
    <property type="entry name" value="Gp_dh_C"/>
    <property type="match status" value="1"/>
</dbReference>
<dbReference type="Pfam" id="PF00044">
    <property type="entry name" value="Gp_dh_N"/>
    <property type="match status" value="1"/>
</dbReference>
<dbReference type="PIRSF" id="PIRSF000149">
    <property type="entry name" value="GAP_DH"/>
    <property type="match status" value="1"/>
</dbReference>
<dbReference type="PRINTS" id="PR00078">
    <property type="entry name" value="G3PDHDRGNASE"/>
</dbReference>
<dbReference type="SMART" id="SM00846">
    <property type="entry name" value="Gp_dh_N"/>
    <property type="match status" value="1"/>
</dbReference>
<dbReference type="SUPFAM" id="SSF55347">
    <property type="entry name" value="Glyceraldehyde-3-phosphate dehydrogenase-like, C-terminal domain"/>
    <property type="match status" value="1"/>
</dbReference>
<dbReference type="SUPFAM" id="SSF51735">
    <property type="entry name" value="NAD(P)-binding Rossmann-fold domains"/>
    <property type="match status" value="1"/>
</dbReference>
<dbReference type="PROSITE" id="PS00071">
    <property type="entry name" value="GAPDH"/>
    <property type="match status" value="1"/>
</dbReference>